<dbReference type="EC" id="4.2.1.11" evidence="1"/>
<dbReference type="EMBL" id="CP000572">
    <property type="protein sequence ID" value="ABN90467.1"/>
    <property type="molecule type" value="Genomic_DNA"/>
</dbReference>
<dbReference type="RefSeq" id="WP_004192585.1">
    <property type="nucleotide sequence ID" value="NC_009076.1"/>
</dbReference>
<dbReference type="SMR" id="A3NX13"/>
<dbReference type="GeneID" id="93060827"/>
<dbReference type="KEGG" id="bpl:BURPS1106A_2631"/>
<dbReference type="HOGENOM" id="CLU_031223_2_1_4"/>
<dbReference type="UniPathway" id="UPA00109">
    <property type="reaction ID" value="UER00187"/>
</dbReference>
<dbReference type="Proteomes" id="UP000006738">
    <property type="component" value="Chromosome I"/>
</dbReference>
<dbReference type="GO" id="GO:0009986">
    <property type="term" value="C:cell surface"/>
    <property type="evidence" value="ECO:0007669"/>
    <property type="project" value="UniProtKB-SubCell"/>
</dbReference>
<dbReference type="GO" id="GO:0005576">
    <property type="term" value="C:extracellular region"/>
    <property type="evidence" value="ECO:0007669"/>
    <property type="project" value="UniProtKB-SubCell"/>
</dbReference>
<dbReference type="GO" id="GO:0000015">
    <property type="term" value="C:phosphopyruvate hydratase complex"/>
    <property type="evidence" value="ECO:0007669"/>
    <property type="project" value="InterPro"/>
</dbReference>
<dbReference type="GO" id="GO:0000287">
    <property type="term" value="F:magnesium ion binding"/>
    <property type="evidence" value="ECO:0007669"/>
    <property type="project" value="UniProtKB-UniRule"/>
</dbReference>
<dbReference type="GO" id="GO:0004634">
    <property type="term" value="F:phosphopyruvate hydratase activity"/>
    <property type="evidence" value="ECO:0007669"/>
    <property type="project" value="UniProtKB-UniRule"/>
</dbReference>
<dbReference type="GO" id="GO:0006096">
    <property type="term" value="P:glycolytic process"/>
    <property type="evidence" value="ECO:0007669"/>
    <property type="project" value="UniProtKB-UniRule"/>
</dbReference>
<dbReference type="CDD" id="cd03313">
    <property type="entry name" value="enolase"/>
    <property type="match status" value="1"/>
</dbReference>
<dbReference type="FunFam" id="3.20.20.120:FF:000001">
    <property type="entry name" value="Enolase"/>
    <property type="match status" value="1"/>
</dbReference>
<dbReference type="FunFam" id="3.30.390.10:FF:000001">
    <property type="entry name" value="Enolase"/>
    <property type="match status" value="1"/>
</dbReference>
<dbReference type="Gene3D" id="3.20.20.120">
    <property type="entry name" value="Enolase-like C-terminal domain"/>
    <property type="match status" value="1"/>
</dbReference>
<dbReference type="Gene3D" id="3.30.390.10">
    <property type="entry name" value="Enolase-like, N-terminal domain"/>
    <property type="match status" value="1"/>
</dbReference>
<dbReference type="HAMAP" id="MF_00318">
    <property type="entry name" value="Enolase"/>
    <property type="match status" value="1"/>
</dbReference>
<dbReference type="InterPro" id="IPR000941">
    <property type="entry name" value="Enolase"/>
</dbReference>
<dbReference type="InterPro" id="IPR036849">
    <property type="entry name" value="Enolase-like_C_sf"/>
</dbReference>
<dbReference type="InterPro" id="IPR029017">
    <property type="entry name" value="Enolase-like_N"/>
</dbReference>
<dbReference type="InterPro" id="IPR020810">
    <property type="entry name" value="Enolase_C"/>
</dbReference>
<dbReference type="InterPro" id="IPR020809">
    <property type="entry name" value="Enolase_CS"/>
</dbReference>
<dbReference type="InterPro" id="IPR020811">
    <property type="entry name" value="Enolase_N"/>
</dbReference>
<dbReference type="NCBIfam" id="TIGR01060">
    <property type="entry name" value="eno"/>
    <property type="match status" value="1"/>
</dbReference>
<dbReference type="PANTHER" id="PTHR11902">
    <property type="entry name" value="ENOLASE"/>
    <property type="match status" value="1"/>
</dbReference>
<dbReference type="PANTHER" id="PTHR11902:SF1">
    <property type="entry name" value="ENOLASE"/>
    <property type="match status" value="1"/>
</dbReference>
<dbReference type="Pfam" id="PF00113">
    <property type="entry name" value="Enolase_C"/>
    <property type="match status" value="1"/>
</dbReference>
<dbReference type="Pfam" id="PF03952">
    <property type="entry name" value="Enolase_N"/>
    <property type="match status" value="1"/>
</dbReference>
<dbReference type="PIRSF" id="PIRSF001400">
    <property type="entry name" value="Enolase"/>
    <property type="match status" value="1"/>
</dbReference>
<dbReference type="PRINTS" id="PR00148">
    <property type="entry name" value="ENOLASE"/>
</dbReference>
<dbReference type="SFLD" id="SFLDF00002">
    <property type="entry name" value="enolase"/>
    <property type="match status" value="1"/>
</dbReference>
<dbReference type="SFLD" id="SFLDG00178">
    <property type="entry name" value="enolase"/>
    <property type="match status" value="1"/>
</dbReference>
<dbReference type="SMART" id="SM01192">
    <property type="entry name" value="Enolase_C"/>
    <property type="match status" value="1"/>
</dbReference>
<dbReference type="SMART" id="SM01193">
    <property type="entry name" value="Enolase_N"/>
    <property type="match status" value="1"/>
</dbReference>
<dbReference type="SUPFAM" id="SSF51604">
    <property type="entry name" value="Enolase C-terminal domain-like"/>
    <property type="match status" value="1"/>
</dbReference>
<dbReference type="SUPFAM" id="SSF54826">
    <property type="entry name" value="Enolase N-terminal domain-like"/>
    <property type="match status" value="1"/>
</dbReference>
<dbReference type="PROSITE" id="PS00164">
    <property type="entry name" value="ENOLASE"/>
    <property type="match status" value="1"/>
</dbReference>
<gene>
    <name evidence="1" type="primary">eno</name>
    <name type="ordered locus">BURPS1106A_2631</name>
</gene>
<proteinExistence type="inferred from homology"/>
<comment type="function">
    <text evidence="1">Catalyzes the reversible conversion of 2-phosphoglycerate (2-PG) into phosphoenolpyruvate (PEP). It is essential for the degradation of carbohydrates via glycolysis.</text>
</comment>
<comment type="catalytic activity">
    <reaction evidence="1">
        <text>(2R)-2-phosphoglycerate = phosphoenolpyruvate + H2O</text>
        <dbReference type="Rhea" id="RHEA:10164"/>
        <dbReference type="ChEBI" id="CHEBI:15377"/>
        <dbReference type="ChEBI" id="CHEBI:58289"/>
        <dbReference type="ChEBI" id="CHEBI:58702"/>
        <dbReference type="EC" id="4.2.1.11"/>
    </reaction>
</comment>
<comment type="cofactor">
    <cofactor evidence="1">
        <name>Mg(2+)</name>
        <dbReference type="ChEBI" id="CHEBI:18420"/>
    </cofactor>
    <text evidence="1">Binds a second Mg(2+) ion via substrate during catalysis.</text>
</comment>
<comment type="pathway">
    <text evidence="1">Carbohydrate degradation; glycolysis; pyruvate from D-glyceraldehyde 3-phosphate: step 4/5.</text>
</comment>
<comment type="subcellular location">
    <subcellularLocation>
        <location evidence="1">Cytoplasm</location>
    </subcellularLocation>
    <subcellularLocation>
        <location evidence="1">Secreted</location>
    </subcellularLocation>
    <subcellularLocation>
        <location evidence="1">Cell surface</location>
    </subcellularLocation>
    <text evidence="1">Fractions of enolase are present in both the cytoplasm and on the cell surface.</text>
</comment>
<comment type="similarity">
    <text evidence="1">Belongs to the enolase family.</text>
</comment>
<protein>
    <recommendedName>
        <fullName evidence="1">Enolase</fullName>
        <ecNumber evidence="1">4.2.1.11</ecNumber>
    </recommendedName>
    <alternativeName>
        <fullName evidence="1">2-phospho-D-glycerate hydro-lyase</fullName>
    </alternativeName>
    <alternativeName>
        <fullName evidence="1">2-phosphoglycerate dehydratase</fullName>
    </alternativeName>
</protein>
<organism>
    <name type="scientific">Burkholderia pseudomallei (strain 1106a)</name>
    <dbReference type="NCBI Taxonomy" id="357348"/>
    <lineage>
        <taxon>Bacteria</taxon>
        <taxon>Pseudomonadati</taxon>
        <taxon>Pseudomonadota</taxon>
        <taxon>Betaproteobacteria</taxon>
        <taxon>Burkholderiales</taxon>
        <taxon>Burkholderiaceae</taxon>
        <taxon>Burkholderia</taxon>
        <taxon>pseudomallei group</taxon>
    </lineage>
</organism>
<sequence length="427" mass="45683">MSAIVDIIGREILDSRGNPTVECDVLLESGTMGRAAVPSGASTGSREAIELRDGEAGRYGGKGVLKAVEHINTEISEAIMGLDASEQAFLDKTLLELDGTDNKSRLGANAMLAVSMAVAKAAAEEAGLPLYRYFGGSGAMQLPVPMMNIVNGGAHANNSLDIQEFMIVPVSQPTFREALRCGAEVFHALKKILGDRGMSTAVGDEGGFAPNFGSNDECLSTILQAIEKAGYRAGEDVLLALDCAASEFYHDGKYQLAGEGLQLSSAEFTDYLATLADKFPIVSIEDGMHEGDWDGWKLLTERLGKKVQLVGDDLFVTNTRILKEGIEKGIANSILIKINQIGTLTETFAAIEMAKRARYTAVISHRSGETEDSTIADIAVGLNAGQIKTGSLSRSDRISKYNQLLRIEEDLGDIASYPGKSAFYNLR</sequence>
<accession>A3NX13</accession>
<keyword id="KW-0963">Cytoplasm</keyword>
<keyword id="KW-0324">Glycolysis</keyword>
<keyword id="KW-0456">Lyase</keyword>
<keyword id="KW-0460">Magnesium</keyword>
<keyword id="KW-0479">Metal-binding</keyword>
<keyword id="KW-0964">Secreted</keyword>
<reference key="1">
    <citation type="journal article" date="2010" name="Genome Biol. Evol.">
        <title>Continuing evolution of Burkholderia mallei through genome reduction and large-scale rearrangements.</title>
        <authorList>
            <person name="Losada L."/>
            <person name="Ronning C.M."/>
            <person name="DeShazer D."/>
            <person name="Woods D."/>
            <person name="Fedorova N."/>
            <person name="Kim H.S."/>
            <person name="Shabalina S.A."/>
            <person name="Pearson T.R."/>
            <person name="Brinkac L."/>
            <person name="Tan P."/>
            <person name="Nandi T."/>
            <person name="Crabtree J."/>
            <person name="Badger J."/>
            <person name="Beckstrom-Sternberg S."/>
            <person name="Saqib M."/>
            <person name="Schutzer S.E."/>
            <person name="Keim P."/>
            <person name="Nierman W.C."/>
        </authorList>
    </citation>
    <scope>NUCLEOTIDE SEQUENCE [LARGE SCALE GENOMIC DNA]</scope>
    <source>
        <strain>1106a</strain>
    </source>
</reference>
<feature type="chain" id="PRO_1000019194" description="Enolase">
    <location>
        <begin position="1"/>
        <end position="427"/>
    </location>
</feature>
<feature type="active site" description="Proton donor" evidence="1">
    <location>
        <position position="205"/>
    </location>
</feature>
<feature type="active site" description="Proton acceptor" evidence="1">
    <location>
        <position position="337"/>
    </location>
</feature>
<feature type="binding site" evidence="1">
    <location>
        <position position="163"/>
    </location>
    <ligand>
        <name>(2R)-2-phosphoglycerate</name>
        <dbReference type="ChEBI" id="CHEBI:58289"/>
    </ligand>
</feature>
<feature type="binding site" evidence="1">
    <location>
        <position position="242"/>
    </location>
    <ligand>
        <name>Mg(2+)</name>
        <dbReference type="ChEBI" id="CHEBI:18420"/>
    </ligand>
</feature>
<feature type="binding site" evidence="1">
    <location>
        <position position="285"/>
    </location>
    <ligand>
        <name>Mg(2+)</name>
        <dbReference type="ChEBI" id="CHEBI:18420"/>
    </ligand>
</feature>
<feature type="binding site" evidence="1">
    <location>
        <position position="312"/>
    </location>
    <ligand>
        <name>Mg(2+)</name>
        <dbReference type="ChEBI" id="CHEBI:18420"/>
    </ligand>
</feature>
<feature type="binding site" evidence="1">
    <location>
        <position position="337"/>
    </location>
    <ligand>
        <name>(2R)-2-phosphoglycerate</name>
        <dbReference type="ChEBI" id="CHEBI:58289"/>
    </ligand>
</feature>
<feature type="binding site" evidence="1">
    <location>
        <position position="366"/>
    </location>
    <ligand>
        <name>(2R)-2-phosphoglycerate</name>
        <dbReference type="ChEBI" id="CHEBI:58289"/>
    </ligand>
</feature>
<feature type="binding site" evidence="1">
    <location>
        <position position="367"/>
    </location>
    <ligand>
        <name>(2R)-2-phosphoglycerate</name>
        <dbReference type="ChEBI" id="CHEBI:58289"/>
    </ligand>
</feature>
<feature type="binding site" evidence="1">
    <location>
        <position position="388"/>
    </location>
    <ligand>
        <name>(2R)-2-phosphoglycerate</name>
        <dbReference type="ChEBI" id="CHEBI:58289"/>
    </ligand>
</feature>
<name>ENO_BURP0</name>
<evidence type="ECO:0000255" key="1">
    <source>
        <dbReference type="HAMAP-Rule" id="MF_00318"/>
    </source>
</evidence>